<comment type="function">
    <text evidence="1">Catalyzes the deacetylation of 1D-myo-inositol 2-acetamido-2-deoxy-alpha-D-glucopyranoside (GlcNAc-Ins) in the mycothiol biosynthesis pathway.</text>
</comment>
<comment type="catalytic activity">
    <reaction evidence="1">
        <text>1D-myo-inositol 2-acetamido-2-deoxy-alpha-D-glucopyranoside + H2O = 1D-myo-inositol 2-amino-2-deoxy-alpha-D-glucopyranoside + acetate</text>
        <dbReference type="Rhea" id="RHEA:26180"/>
        <dbReference type="ChEBI" id="CHEBI:15377"/>
        <dbReference type="ChEBI" id="CHEBI:30089"/>
        <dbReference type="ChEBI" id="CHEBI:52442"/>
        <dbReference type="ChEBI" id="CHEBI:58886"/>
        <dbReference type="EC" id="3.5.1.103"/>
    </reaction>
</comment>
<comment type="cofactor">
    <cofactor evidence="1">
        <name>Zn(2+)</name>
        <dbReference type="ChEBI" id="CHEBI:29105"/>
    </cofactor>
    <text evidence="1">Binds 1 zinc ion per subunit.</text>
</comment>
<comment type="similarity">
    <text evidence="1">Belongs to the MshB deacetylase family.</text>
</comment>
<proteinExistence type="inferred from homology"/>
<evidence type="ECO:0000255" key="1">
    <source>
        <dbReference type="HAMAP-Rule" id="MF_01696"/>
    </source>
</evidence>
<feature type="chain" id="PRO_0000400196" description="1D-myo-inositol 2-acetamido-2-deoxy-alpha-D-glucopyranoside deacetylase">
    <location>
        <begin position="1"/>
        <end position="303"/>
    </location>
</feature>
<feature type="binding site" evidence="1">
    <location>
        <position position="13"/>
    </location>
    <ligand>
        <name>Zn(2+)</name>
        <dbReference type="ChEBI" id="CHEBI:29105"/>
    </ligand>
</feature>
<feature type="binding site" evidence="1">
    <location>
        <position position="16"/>
    </location>
    <ligand>
        <name>Zn(2+)</name>
        <dbReference type="ChEBI" id="CHEBI:29105"/>
    </ligand>
</feature>
<feature type="binding site" evidence="1">
    <location>
        <position position="147"/>
    </location>
    <ligand>
        <name>Zn(2+)</name>
        <dbReference type="ChEBI" id="CHEBI:29105"/>
    </ligand>
</feature>
<sequence>MSETPRLLFVHAHPDDESLSNGATIAHYTSRGAQVHVVTCTLGEEGEVIGDRWAQLTADHADQLGGYRIGELTAALRALGVSAPIYLGGAGRWRDSGMAGTDQRSQRRFVDADPRQTVGALVAIIRELRPHVVVTYDPNGGYGHPDHVHTHTVTTAAVAAAGVGSGTADHPGDPWTVPKFYWTVLGLSALISGARALVPDDLRPEWVLPRADEIAFGYSDDGIDAVVEADEQARAAKVAALAAHATQVVVGPTGRAAALSNNLALPILADEHYVLAGGSAGARDERGWETDLLAGLGFTASGT</sequence>
<keyword id="KW-0378">Hydrolase</keyword>
<keyword id="KW-0479">Metal-binding</keyword>
<keyword id="KW-0862">Zinc</keyword>
<gene>
    <name evidence="1" type="primary">mshB</name>
    <name type="ordered locus">JTY_1206</name>
</gene>
<protein>
    <recommendedName>
        <fullName evidence="1">1D-myo-inositol 2-acetamido-2-deoxy-alpha-D-glucopyranoside deacetylase</fullName>
        <shortName evidence="1">GlcNAc-Ins deacetylase</shortName>
        <ecNumber evidence="1">3.5.1.103</ecNumber>
    </recommendedName>
    <alternativeName>
        <fullName>N-acetyl-1-D-myo-inositol 2-amino-2-deoxy-alpha-D-glucopyranoside deacetylase</fullName>
    </alternativeName>
</protein>
<reference key="1">
    <citation type="journal article" date="2009" name="Vaccine">
        <title>Whole genome sequence analysis of Mycobacterium bovis bacillus Calmette-Guerin (BCG) Tokyo 172: a comparative study of BCG vaccine substrains.</title>
        <authorList>
            <person name="Seki M."/>
            <person name="Honda I."/>
            <person name="Fujita I."/>
            <person name="Yano I."/>
            <person name="Yamamoto S."/>
            <person name="Koyama A."/>
        </authorList>
    </citation>
    <scope>NUCLEOTIDE SEQUENCE [LARGE SCALE GENOMIC DNA]</scope>
    <source>
        <strain>BCG / Tokyo 172 / ATCC 35737 / TMC 1019</strain>
    </source>
</reference>
<organism>
    <name type="scientific">Mycobacterium bovis (strain BCG / Tokyo 172 / ATCC 35737 / TMC 1019)</name>
    <dbReference type="NCBI Taxonomy" id="561275"/>
    <lineage>
        <taxon>Bacteria</taxon>
        <taxon>Bacillati</taxon>
        <taxon>Actinomycetota</taxon>
        <taxon>Actinomycetes</taxon>
        <taxon>Mycobacteriales</taxon>
        <taxon>Mycobacteriaceae</taxon>
        <taxon>Mycobacterium</taxon>
        <taxon>Mycobacterium tuberculosis complex</taxon>
    </lineage>
</organism>
<dbReference type="EC" id="3.5.1.103" evidence="1"/>
<dbReference type="EMBL" id="AP010918">
    <property type="protein sequence ID" value="BAH25494.1"/>
    <property type="molecule type" value="Genomic_DNA"/>
</dbReference>
<dbReference type="RefSeq" id="WP_003406154.1">
    <property type="nucleotide sequence ID" value="NZ_CP014566.1"/>
</dbReference>
<dbReference type="SMR" id="C1AMG5"/>
<dbReference type="GeneID" id="45425142"/>
<dbReference type="KEGG" id="mbt:JTY_1206"/>
<dbReference type="HOGENOM" id="CLU_049311_2_1_11"/>
<dbReference type="GO" id="GO:0035595">
    <property type="term" value="F:N-acetylglucosaminylinositol deacetylase activity"/>
    <property type="evidence" value="ECO:0007669"/>
    <property type="project" value="UniProtKB-EC"/>
</dbReference>
<dbReference type="GO" id="GO:0008270">
    <property type="term" value="F:zinc ion binding"/>
    <property type="evidence" value="ECO:0007669"/>
    <property type="project" value="UniProtKB-UniRule"/>
</dbReference>
<dbReference type="GO" id="GO:0010125">
    <property type="term" value="P:mycothiol biosynthetic process"/>
    <property type="evidence" value="ECO:0007669"/>
    <property type="project" value="UniProtKB-UniRule"/>
</dbReference>
<dbReference type="Gene3D" id="3.40.50.10320">
    <property type="entry name" value="LmbE-like"/>
    <property type="match status" value="1"/>
</dbReference>
<dbReference type="HAMAP" id="MF_01696">
    <property type="entry name" value="MshB"/>
    <property type="match status" value="1"/>
</dbReference>
<dbReference type="InterPro" id="IPR003737">
    <property type="entry name" value="GlcNAc_PI_deacetylase-related"/>
</dbReference>
<dbReference type="InterPro" id="IPR024078">
    <property type="entry name" value="LmbE-like_dom_sf"/>
</dbReference>
<dbReference type="InterPro" id="IPR017810">
    <property type="entry name" value="Mycothiol_biosynthesis_MshB"/>
</dbReference>
<dbReference type="NCBIfam" id="TIGR03445">
    <property type="entry name" value="mycothiol_MshB"/>
    <property type="match status" value="1"/>
</dbReference>
<dbReference type="PANTHER" id="PTHR12993:SF26">
    <property type="entry name" value="1D-MYO-INOSITOL 2-ACETAMIDO-2-DEOXY-ALPHA-D-GLUCOPYRANOSIDE DEACETYLASE"/>
    <property type="match status" value="1"/>
</dbReference>
<dbReference type="PANTHER" id="PTHR12993">
    <property type="entry name" value="N-ACETYLGLUCOSAMINYL-PHOSPHATIDYLINOSITOL DE-N-ACETYLASE-RELATED"/>
    <property type="match status" value="1"/>
</dbReference>
<dbReference type="Pfam" id="PF02585">
    <property type="entry name" value="PIG-L"/>
    <property type="match status" value="1"/>
</dbReference>
<dbReference type="SUPFAM" id="SSF102588">
    <property type="entry name" value="LmbE-like"/>
    <property type="match status" value="1"/>
</dbReference>
<name>MSHB_MYCBT</name>
<accession>C1AMG5</accession>